<evidence type="ECO:0000255" key="1">
    <source>
        <dbReference type="HAMAP-Rule" id="MF_00067"/>
    </source>
</evidence>
<protein>
    <recommendedName>
        <fullName evidence="1">Phosphoheptose isomerase</fullName>
        <ecNumber evidence="1">5.3.1.28</ecNumber>
    </recommendedName>
    <alternativeName>
        <fullName evidence="1">Sedoheptulose 7-phosphate isomerase</fullName>
    </alternativeName>
</protein>
<accession>B6HZW0</accession>
<name>GMHA_ECOSE</name>
<reference key="1">
    <citation type="journal article" date="2008" name="DNA Res.">
        <title>Complete genome sequence and comparative analysis of the wild-type commensal Escherichia coli strain SE11 isolated from a healthy adult.</title>
        <authorList>
            <person name="Oshima K."/>
            <person name="Toh H."/>
            <person name="Ogura Y."/>
            <person name="Sasamoto H."/>
            <person name="Morita H."/>
            <person name="Park S.-H."/>
            <person name="Ooka T."/>
            <person name="Iyoda S."/>
            <person name="Taylor T.D."/>
            <person name="Hayashi T."/>
            <person name="Itoh K."/>
            <person name="Hattori M."/>
        </authorList>
    </citation>
    <scope>NUCLEOTIDE SEQUENCE [LARGE SCALE GENOMIC DNA]</scope>
    <source>
        <strain>SE11</strain>
    </source>
</reference>
<feature type="chain" id="PRO_1000092272" description="Phosphoheptose isomerase">
    <location>
        <begin position="1"/>
        <end position="192"/>
    </location>
</feature>
<feature type="domain" description="SIS" evidence="1">
    <location>
        <begin position="37"/>
        <end position="192"/>
    </location>
</feature>
<feature type="binding site" evidence="1">
    <location>
        <begin position="52"/>
        <end position="54"/>
    </location>
    <ligand>
        <name>substrate</name>
    </ligand>
</feature>
<feature type="binding site" evidence="1">
    <location>
        <position position="61"/>
    </location>
    <ligand>
        <name>Zn(2+)</name>
        <dbReference type="ChEBI" id="CHEBI:29105"/>
    </ligand>
</feature>
<feature type="binding site" evidence="1">
    <location>
        <position position="65"/>
    </location>
    <ligand>
        <name>substrate</name>
    </ligand>
</feature>
<feature type="binding site" evidence="1">
    <location>
        <position position="65"/>
    </location>
    <ligand>
        <name>Zn(2+)</name>
        <dbReference type="ChEBI" id="CHEBI:29105"/>
    </ligand>
</feature>
<feature type="binding site" evidence="1">
    <location>
        <begin position="93"/>
        <end position="94"/>
    </location>
    <ligand>
        <name>substrate</name>
    </ligand>
</feature>
<feature type="binding site" evidence="1">
    <location>
        <begin position="119"/>
        <end position="121"/>
    </location>
    <ligand>
        <name>substrate</name>
    </ligand>
</feature>
<feature type="binding site" evidence="1">
    <location>
        <position position="124"/>
    </location>
    <ligand>
        <name>substrate</name>
    </ligand>
</feature>
<feature type="binding site" evidence="1">
    <location>
        <position position="172"/>
    </location>
    <ligand>
        <name>substrate</name>
    </ligand>
</feature>
<feature type="binding site" evidence="1">
    <location>
        <position position="172"/>
    </location>
    <ligand>
        <name>Zn(2+)</name>
        <dbReference type="ChEBI" id="CHEBI:29105"/>
    </ligand>
</feature>
<feature type="binding site" evidence="1">
    <location>
        <position position="180"/>
    </location>
    <ligand>
        <name>Zn(2+)</name>
        <dbReference type="ChEBI" id="CHEBI:29105"/>
    </ligand>
</feature>
<comment type="function">
    <text evidence="1">Catalyzes the isomerization of sedoheptulose 7-phosphate in D-glycero-D-manno-heptose 7-phosphate.</text>
</comment>
<comment type="catalytic activity">
    <reaction evidence="1">
        <text>2 D-sedoheptulose 7-phosphate = D-glycero-alpha-D-manno-heptose 7-phosphate + D-glycero-beta-D-manno-heptose 7-phosphate</text>
        <dbReference type="Rhea" id="RHEA:27489"/>
        <dbReference type="ChEBI" id="CHEBI:57483"/>
        <dbReference type="ChEBI" id="CHEBI:60203"/>
        <dbReference type="ChEBI" id="CHEBI:60204"/>
        <dbReference type="EC" id="5.3.1.28"/>
    </reaction>
</comment>
<comment type="cofactor">
    <cofactor evidence="1">
        <name>Zn(2+)</name>
        <dbReference type="ChEBI" id="CHEBI:29105"/>
    </cofactor>
    <text evidence="1">Binds 1 zinc ion per subunit.</text>
</comment>
<comment type="pathway">
    <text evidence="1">Carbohydrate biosynthesis; D-glycero-D-manno-heptose 7-phosphate biosynthesis; D-glycero-alpha-D-manno-heptose 7-phosphate and D-glycero-beta-D-manno-heptose 7-phosphate from sedoheptulose 7-phosphate: step 1/1.</text>
</comment>
<comment type="subunit">
    <text evidence="1">Homotetramer.</text>
</comment>
<comment type="subcellular location">
    <subcellularLocation>
        <location evidence="1">Cytoplasm</location>
    </subcellularLocation>
</comment>
<comment type="miscellaneous">
    <text evidence="1">The reaction produces a racemic mixture of D-glycero-alpha-D-manno-heptose 7-phosphate and D-glycero-beta-D-manno-heptose 7-phosphate.</text>
</comment>
<comment type="similarity">
    <text evidence="1">Belongs to the SIS family. GmhA subfamily.</text>
</comment>
<sequence>MYQDLIRNELNEAAETLANFLKDDANIHAIQRAAVLLADSFKAGGKVLSCGNGGSHCDAMHFAEELTGRYRENRPGYPAIAISDVSHISCVGNDFGFNDIFSRYVEAVGREGDVLLGISTSGNSANVIKAIAAAREKGMKVITLTGKDGGKMAGTADIEIRVPHFGYADRIQEIHIKVIHILIQLIEKEMVK</sequence>
<gene>
    <name evidence="1" type="primary">gmhA</name>
    <name type="ordered locus">ECSE_0243</name>
</gene>
<proteinExistence type="inferred from homology"/>
<dbReference type="EC" id="5.3.1.28" evidence="1"/>
<dbReference type="EMBL" id="AP009240">
    <property type="protein sequence ID" value="BAG75767.1"/>
    <property type="molecule type" value="Genomic_DNA"/>
</dbReference>
<dbReference type="SMR" id="B6HZW0"/>
<dbReference type="KEGG" id="ecy:ECSE_0243"/>
<dbReference type="HOGENOM" id="CLU_080999_4_0_6"/>
<dbReference type="UniPathway" id="UPA00041">
    <property type="reaction ID" value="UER00436"/>
</dbReference>
<dbReference type="Proteomes" id="UP000008199">
    <property type="component" value="Chromosome"/>
</dbReference>
<dbReference type="GO" id="GO:0005737">
    <property type="term" value="C:cytoplasm"/>
    <property type="evidence" value="ECO:0007669"/>
    <property type="project" value="UniProtKB-SubCell"/>
</dbReference>
<dbReference type="GO" id="GO:0097367">
    <property type="term" value="F:carbohydrate derivative binding"/>
    <property type="evidence" value="ECO:0007669"/>
    <property type="project" value="InterPro"/>
</dbReference>
<dbReference type="GO" id="GO:0008968">
    <property type="term" value="F:D-sedoheptulose 7-phosphate isomerase activity"/>
    <property type="evidence" value="ECO:0007669"/>
    <property type="project" value="UniProtKB-UniRule"/>
</dbReference>
<dbReference type="GO" id="GO:0008270">
    <property type="term" value="F:zinc ion binding"/>
    <property type="evidence" value="ECO:0007669"/>
    <property type="project" value="UniProtKB-UniRule"/>
</dbReference>
<dbReference type="GO" id="GO:0005975">
    <property type="term" value="P:carbohydrate metabolic process"/>
    <property type="evidence" value="ECO:0007669"/>
    <property type="project" value="UniProtKB-UniRule"/>
</dbReference>
<dbReference type="GO" id="GO:2001061">
    <property type="term" value="P:D-glycero-D-manno-heptose 7-phosphate biosynthetic process"/>
    <property type="evidence" value="ECO:0007669"/>
    <property type="project" value="UniProtKB-UniPathway"/>
</dbReference>
<dbReference type="CDD" id="cd05006">
    <property type="entry name" value="SIS_GmhA"/>
    <property type="match status" value="1"/>
</dbReference>
<dbReference type="FunFam" id="3.40.50.10490:FF:000013">
    <property type="entry name" value="Phosphoheptose isomerase"/>
    <property type="match status" value="1"/>
</dbReference>
<dbReference type="Gene3D" id="3.40.50.10490">
    <property type="entry name" value="Glucose-6-phosphate isomerase like protein, domain 1"/>
    <property type="match status" value="1"/>
</dbReference>
<dbReference type="HAMAP" id="MF_00067">
    <property type="entry name" value="GmhA"/>
    <property type="match status" value="1"/>
</dbReference>
<dbReference type="InterPro" id="IPR035461">
    <property type="entry name" value="GmhA/DiaA"/>
</dbReference>
<dbReference type="InterPro" id="IPR004515">
    <property type="entry name" value="Phosphoheptose_Isoase"/>
</dbReference>
<dbReference type="InterPro" id="IPR001347">
    <property type="entry name" value="SIS_dom"/>
</dbReference>
<dbReference type="InterPro" id="IPR046348">
    <property type="entry name" value="SIS_dom_sf"/>
</dbReference>
<dbReference type="InterPro" id="IPR050099">
    <property type="entry name" value="SIS_GmhA/DiaA_subfam"/>
</dbReference>
<dbReference type="NCBIfam" id="TIGR00441">
    <property type="entry name" value="gmhA"/>
    <property type="match status" value="1"/>
</dbReference>
<dbReference type="NCBIfam" id="NF001628">
    <property type="entry name" value="PRK00414.1"/>
    <property type="match status" value="1"/>
</dbReference>
<dbReference type="PANTHER" id="PTHR30390:SF7">
    <property type="entry name" value="PHOSPHOHEPTOSE ISOMERASE"/>
    <property type="match status" value="1"/>
</dbReference>
<dbReference type="PANTHER" id="PTHR30390">
    <property type="entry name" value="SEDOHEPTULOSE 7-PHOSPHATE ISOMERASE / DNAA INITIATOR-ASSOCIATING FACTOR FOR REPLICATION INITIATION"/>
    <property type="match status" value="1"/>
</dbReference>
<dbReference type="Pfam" id="PF13580">
    <property type="entry name" value="SIS_2"/>
    <property type="match status" value="1"/>
</dbReference>
<dbReference type="SUPFAM" id="SSF53697">
    <property type="entry name" value="SIS domain"/>
    <property type="match status" value="1"/>
</dbReference>
<dbReference type="PROSITE" id="PS51464">
    <property type="entry name" value="SIS"/>
    <property type="match status" value="1"/>
</dbReference>
<keyword id="KW-0119">Carbohydrate metabolism</keyword>
<keyword id="KW-0963">Cytoplasm</keyword>
<keyword id="KW-0413">Isomerase</keyword>
<keyword id="KW-0479">Metal-binding</keyword>
<keyword id="KW-0862">Zinc</keyword>
<organism>
    <name type="scientific">Escherichia coli (strain SE11)</name>
    <dbReference type="NCBI Taxonomy" id="409438"/>
    <lineage>
        <taxon>Bacteria</taxon>
        <taxon>Pseudomonadati</taxon>
        <taxon>Pseudomonadota</taxon>
        <taxon>Gammaproteobacteria</taxon>
        <taxon>Enterobacterales</taxon>
        <taxon>Enterobacteriaceae</taxon>
        <taxon>Escherichia</taxon>
    </lineage>
</organism>